<comment type="function">
    <text evidence="1">Catalyzes the oxidation of erythronate-4-phosphate to 3-hydroxy-2-oxo-4-phosphonooxybutanoate.</text>
</comment>
<comment type="catalytic activity">
    <reaction evidence="1">
        <text>4-phospho-D-erythronate + NAD(+) = (R)-3-hydroxy-2-oxo-4-phosphooxybutanoate + NADH + H(+)</text>
        <dbReference type="Rhea" id="RHEA:18829"/>
        <dbReference type="ChEBI" id="CHEBI:15378"/>
        <dbReference type="ChEBI" id="CHEBI:57540"/>
        <dbReference type="ChEBI" id="CHEBI:57945"/>
        <dbReference type="ChEBI" id="CHEBI:58538"/>
        <dbReference type="ChEBI" id="CHEBI:58766"/>
        <dbReference type="EC" id="1.1.1.290"/>
    </reaction>
</comment>
<comment type="pathway">
    <text evidence="1">Cofactor biosynthesis; pyridoxine 5'-phosphate biosynthesis; pyridoxine 5'-phosphate from D-erythrose 4-phosphate: step 2/5.</text>
</comment>
<comment type="subunit">
    <text evidence="1">Homodimer.</text>
</comment>
<comment type="subcellular location">
    <subcellularLocation>
        <location evidence="1">Cytoplasm</location>
    </subcellularLocation>
</comment>
<comment type="similarity">
    <text evidence="1">Belongs to the D-isomer specific 2-hydroxyacid dehydrogenase family. PdxB subfamily.</text>
</comment>
<keyword id="KW-0963">Cytoplasm</keyword>
<keyword id="KW-0520">NAD</keyword>
<keyword id="KW-0560">Oxidoreductase</keyword>
<keyword id="KW-0664">Pyridoxine biosynthesis</keyword>
<keyword id="KW-1185">Reference proteome</keyword>
<sequence length="378" mass="41320">MKILVDENMPYARDLFSRLGEVTAVPGRPIPVAQLADADALMVRSVTKVNESLLAGKPIKFVGTATAGTDHVDEAWLKQAGIGFSAAPGCNAIAVVEYVFSSLLMLAERDGFSLHERTVGIVGVGNVGRRLQARLEALGIKTLLCDPPRADRGDEGDFRSLDELVQHADILTFHTPLFKDGPYKTLHLADEKLIRSLKPGAILINACRGAVVDNTALLTCLSEGQKLSVVLDVWEGEPELNVELLKKVDIGTPHIAGYTLEGKARGTTQVFEAYSKFIGHEQHVALDTLLPAPEFGRITLHGPLDQPTLKRLVHLVYDVRRDDAPLRKVAGIPGEFDKLRKNYLERREWSSLYVICDDASAASLLCKLGFNAVHHPAR</sequence>
<name>PDXB_ECOK1</name>
<organism>
    <name type="scientific">Escherichia coli O1:K1 / APEC</name>
    <dbReference type="NCBI Taxonomy" id="405955"/>
    <lineage>
        <taxon>Bacteria</taxon>
        <taxon>Pseudomonadati</taxon>
        <taxon>Pseudomonadota</taxon>
        <taxon>Gammaproteobacteria</taxon>
        <taxon>Enterobacterales</taxon>
        <taxon>Enterobacteriaceae</taxon>
        <taxon>Escherichia</taxon>
    </lineage>
</organism>
<protein>
    <recommendedName>
        <fullName evidence="1">Erythronate-4-phosphate dehydrogenase</fullName>
        <ecNumber evidence="1">1.1.1.290</ecNumber>
    </recommendedName>
</protein>
<accession>A1ADG9</accession>
<evidence type="ECO:0000255" key="1">
    <source>
        <dbReference type="HAMAP-Rule" id="MF_01825"/>
    </source>
</evidence>
<gene>
    <name evidence="1" type="primary">pdxB</name>
    <name type="ordered locus">Ecok1_22150</name>
    <name type="ORF">APECO1_4244</name>
</gene>
<dbReference type="EC" id="1.1.1.290" evidence="1"/>
<dbReference type="EMBL" id="CP000468">
    <property type="protein sequence ID" value="ABJ01709.1"/>
    <property type="molecule type" value="Genomic_DNA"/>
</dbReference>
<dbReference type="RefSeq" id="WP_000699136.1">
    <property type="nucleotide sequence ID" value="NZ_CADILS010000025.1"/>
</dbReference>
<dbReference type="SMR" id="A1ADG9"/>
<dbReference type="KEGG" id="ecv:APECO1_4244"/>
<dbReference type="HOGENOM" id="CLU_019796_4_0_6"/>
<dbReference type="UniPathway" id="UPA00244">
    <property type="reaction ID" value="UER00310"/>
</dbReference>
<dbReference type="Proteomes" id="UP000008216">
    <property type="component" value="Chromosome"/>
</dbReference>
<dbReference type="GO" id="GO:0005829">
    <property type="term" value="C:cytosol"/>
    <property type="evidence" value="ECO:0007669"/>
    <property type="project" value="UniProtKB-ARBA"/>
</dbReference>
<dbReference type="GO" id="GO:0033711">
    <property type="term" value="F:4-phosphoerythronate dehydrogenase activity"/>
    <property type="evidence" value="ECO:0007669"/>
    <property type="project" value="UniProtKB-EC"/>
</dbReference>
<dbReference type="GO" id="GO:0051287">
    <property type="term" value="F:NAD binding"/>
    <property type="evidence" value="ECO:0007669"/>
    <property type="project" value="InterPro"/>
</dbReference>
<dbReference type="GO" id="GO:0046983">
    <property type="term" value="F:protein dimerization activity"/>
    <property type="evidence" value="ECO:0007669"/>
    <property type="project" value="InterPro"/>
</dbReference>
<dbReference type="GO" id="GO:0036001">
    <property type="term" value="P:'de novo' pyridoxal 5'-phosphate biosynthetic process"/>
    <property type="evidence" value="ECO:0007669"/>
    <property type="project" value="TreeGrafter"/>
</dbReference>
<dbReference type="GO" id="GO:0008615">
    <property type="term" value="P:pyridoxine biosynthetic process"/>
    <property type="evidence" value="ECO:0007669"/>
    <property type="project" value="UniProtKB-UniRule"/>
</dbReference>
<dbReference type="CDD" id="cd12158">
    <property type="entry name" value="ErythrP_dh"/>
    <property type="match status" value="1"/>
</dbReference>
<dbReference type="FunFam" id="3.30.1370.170:FF:000001">
    <property type="entry name" value="Erythronate-4-phosphate dehydrogenase"/>
    <property type="match status" value="1"/>
</dbReference>
<dbReference type="FunFam" id="3.40.50.720:FF:000093">
    <property type="entry name" value="Erythronate-4-phosphate dehydrogenase"/>
    <property type="match status" value="1"/>
</dbReference>
<dbReference type="Gene3D" id="3.30.1370.170">
    <property type="match status" value="1"/>
</dbReference>
<dbReference type="Gene3D" id="3.40.50.720">
    <property type="entry name" value="NAD(P)-binding Rossmann-like Domain"/>
    <property type="match status" value="2"/>
</dbReference>
<dbReference type="HAMAP" id="MF_01825">
    <property type="entry name" value="PdxB"/>
    <property type="match status" value="1"/>
</dbReference>
<dbReference type="InterPro" id="IPR006139">
    <property type="entry name" value="D-isomer_2_OHA_DH_cat_dom"/>
</dbReference>
<dbReference type="InterPro" id="IPR029753">
    <property type="entry name" value="D-isomer_DH_CS"/>
</dbReference>
<dbReference type="InterPro" id="IPR029752">
    <property type="entry name" value="D-isomer_DH_CS1"/>
</dbReference>
<dbReference type="InterPro" id="IPR006140">
    <property type="entry name" value="D-isomer_DH_NAD-bd"/>
</dbReference>
<dbReference type="InterPro" id="IPR020921">
    <property type="entry name" value="Erythronate-4-P_DHase"/>
</dbReference>
<dbReference type="InterPro" id="IPR024531">
    <property type="entry name" value="Erythronate-4-P_DHase_dimer"/>
</dbReference>
<dbReference type="InterPro" id="IPR036291">
    <property type="entry name" value="NAD(P)-bd_dom_sf"/>
</dbReference>
<dbReference type="InterPro" id="IPR038251">
    <property type="entry name" value="PdxB_dimer_sf"/>
</dbReference>
<dbReference type="NCBIfam" id="NF001309">
    <property type="entry name" value="PRK00257.1"/>
    <property type="match status" value="1"/>
</dbReference>
<dbReference type="NCBIfam" id="NF011966">
    <property type="entry name" value="PRK15438.1"/>
    <property type="match status" value="1"/>
</dbReference>
<dbReference type="PANTHER" id="PTHR42938">
    <property type="entry name" value="FORMATE DEHYDROGENASE 1"/>
    <property type="match status" value="1"/>
</dbReference>
<dbReference type="PANTHER" id="PTHR42938:SF9">
    <property type="entry name" value="FORMATE DEHYDROGENASE 1"/>
    <property type="match status" value="1"/>
</dbReference>
<dbReference type="Pfam" id="PF00389">
    <property type="entry name" value="2-Hacid_dh"/>
    <property type="match status" value="1"/>
</dbReference>
<dbReference type="Pfam" id="PF02826">
    <property type="entry name" value="2-Hacid_dh_C"/>
    <property type="match status" value="1"/>
</dbReference>
<dbReference type="Pfam" id="PF11890">
    <property type="entry name" value="DUF3410"/>
    <property type="match status" value="1"/>
</dbReference>
<dbReference type="SUPFAM" id="SSF52283">
    <property type="entry name" value="Formate/glycerate dehydrogenase catalytic domain-like"/>
    <property type="match status" value="1"/>
</dbReference>
<dbReference type="SUPFAM" id="SSF51735">
    <property type="entry name" value="NAD(P)-binding Rossmann-fold domains"/>
    <property type="match status" value="1"/>
</dbReference>
<dbReference type="PROSITE" id="PS00065">
    <property type="entry name" value="D_2_HYDROXYACID_DH_1"/>
    <property type="match status" value="1"/>
</dbReference>
<dbReference type="PROSITE" id="PS00671">
    <property type="entry name" value="D_2_HYDROXYACID_DH_3"/>
    <property type="match status" value="1"/>
</dbReference>
<reference key="1">
    <citation type="journal article" date="2007" name="J. Bacteriol.">
        <title>The genome sequence of avian pathogenic Escherichia coli strain O1:K1:H7 shares strong similarities with human extraintestinal pathogenic E. coli genomes.</title>
        <authorList>
            <person name="Johnson T.J."/>
            <person name="Kariyawasam S."/>
            <person name="Wannemuehler Y."/>
            <person name="Mangiamele P."/>
            <person name="Johnson S.J."/>
            <person name="Doetkott C."/>
            <person name="Skyberg J.A."/>
            <person name="Lynne A.M."/>
            <person name="Johnson J.R."/>
            <person name="Nolan L.K."/>
        </authorList>
    </citation>
    <scope>NUCLEOTIDE SEQUENCE [LARGE SCALE GENOMIC DNA]</scope>
</reference>
<feature type="chain" id="PRO_0000297440" description="Erythronate-4-phosphate dehydrogenase">
    <location>
        <begin position="1"/>
        <end position="378"/>
    </location>
</feature>
<feature type="active site" evidence="1">
    <location>
        <position position="208"/>
    </location>
</feature>
<feature type="active site" evidence="1">
    <location>
        <position position="237"/>
    </location>
</feature>
<feature type="active site" description="Proton donor" evidence="1">
    <location>
        <position position="254"/>
    </location>
</feature>
<feature type="binding site" evidence="1">
    <location>
        <position position="45"/>
    </location>
    <ligand>
        <name>substrate</name>
    </ligand>
</feature>
<feature type="binding site" evidence="1">
    <location>
        <position position="66"/>
    </location>
    <ligand>
        <name>substrate</name>
    </ligand>
</feature>
<feature type="binding site" evidence="1">
    <location>
        <position position="146"/>
    </location>
    <ligand>
        <name>NAD(+)</name>
        <dbReference type="ChEBI" id="CHEBI:57540"/>
    </ligand>
</feature>
<feature type="binding site" evidence="1">
    <location>
        <position position="175"/>
    </location>
    <ligand>
        <name>NAD(+)</name>
        <dbReference type="ChEBI" id="CHEBI:57540"/>
    </ligand>
</feature>
<feature type="binding site" evidence="1">
    <location>
        <position position="232"/>
    </location>
    <ligand>
        <name>NAD(+)</name>
        <dbReference type="ChEBI" id="CHEBI:57540"/>
    </ligand>
</feature>
<feature type="binding site" evidence="1">
    <location>
        <position position="257"/>
    </location>
    <ligand>
        <name>NAD(+)</name>
        <dbReference type="ChEBI" id="CHEBI:57540"/>
    </ligand>
</feature>
<feature type="binding site" evidence="1">
    <location>
        <position position="258"/>
    </location>
    <ligand>
        <name>substrate</name>
    </ligand>
</feature>
<proteinExistence type="inferred from homology"/>